<sequence length="59" mass="6730">MGKKKGKGAVGLIALVCEETGIRNYTTTKNRRNTQEKLELMKYCPSLRKHTLHKEGKIK</sequence>
<reference key="1">
    <citation type="journal article" date="2008" name="PLoS Genet.">
        <title>The genome of Borrelia recurrentis, the agent of deadly louse-borne relapsing fever, is a degraded subset of tick-borne Borrelia duttonii.</title>
        <authorList>
            <person name="Lescot M."/>
            <person name="Audic S."/>
            <person name="Robert C."/>
            <person name="Nguyen T.T."/>
            <person name="Blanc G."/>
            <person name="Cutler S.J."/>
            <person name="Wincker P."/>
            <person name="Couloux A."/>
            <person name="Claverie J.-M."/>
            <person name="Raoult D."/>
            <person name="Drancourt M."/>
        </authorList>
    </citation>
    <scope>NUCLEOTIDE SEQUENCE [LARGE SCALE GENOMIC DNA]</scope>
    <source>
        <strain>A1</strain>
    </source>
</reference>
<proteinExistence type="inferred from homology"/>
<accession>B5RRK4</accession>
<gene>
    <name evidence="1" type="primary">rpmG</name>
    <name type="ordered locus">BRE_395</name>
</gene>
<keyword id="KW-0687">Ribonucleoprotein</keyword>
<keyword id="KW-0689">Ribosomal protein</keyword>
<protein>
    <recommendedName>
        <fullName evidence="1">Large ribosomal subunit protein bL33</fullName>
    </recommendedName>
    <alternativeName>
        <fullName evidence="2">50S ribosomal protein L33</fullName>
    </alternativeName>
</protein>
<feature type="chain" id="PRO_0000356404" description="Large ribosomal subunit protein bL33">
    <location>
        <begin position="1"/>
        <end position="59"/>
    </location>
</feature>
<comment type="similarity">
    <text evidence="1">Belongs to the bacterial ribosomal protein bL33 family.</text>
</comment>
<evidence type="ECO:0000255" key="1">
    <source>
        <dbReference type="HAMAP-Rule" id="MF_00294"/>
    </source>
</evidence>
<evidence type="ECO:0000305" key="2"/>
<organism>
    <name type="scientific">Borrelia recurrentis (strain A1)</name>
    <dbReference type="NCBI Taxonomy" id="412418"/>
    <lineage>
        <taxon>Bacteria</taxon>
        <taxon>Pseudomonadati</taxon>
        <taxon>Spirochaetota</taxon>
        <taxon>Spirochaetia</taxon>
        <taxon>Spirochaetales</taxon>
        <taxon>Borreliaceae</taxon>
        <taxon>Borrelia</taxon>
    </lineage>
</organism>
<name>RL33_BORRA</name>
<dbReference type="EMBL" id="CP000993">
    <property type="protein sequence ID" value="ACH94638.1"/>
    <property type="molecule type" value="Genomic_DNA"/>
</dbReference>
<dbReference type="RefSeq" id="WP_012538153.1">
    <property type="nucleotide sequence ID" value="NZ_CP169983.1"/>
</dbReference>
<dbReference type="SMR" id="B5RRK4"/>
<dbReference type="KEGG" id="bre:BRE_395"/>
<dbReference type="HOGENOM" id="CLU_190949_0_2_12"/>
<dbReference type="Proteomes" id="UP000000612">
    <property type="component" value="Chromosome"/>
</dbReference>
<dbReference type="GO" id="GO:0005737">
    <property type="term" value="C:cytoplasm"/>
    <property type="evidence" value="ECO:0007669"/>
    <property type="project" value="UniProtKB-ARBA"/>
</dbReference>
<dbReference type="GO" id="GO:1990904">
    <property type="term" value="C:ribonucleoprotein complex"/>
    <property type="evidence" value="ECO:0007669"/>
    <property type="project" value="UniProtKB-KW"/>
</dbReference>
<dbReference type="GO" id="GO:0005840">
    <property type="term" value="C:ribosome"/>
    <property type="evidence" value="ECO:0007669"/>
    <property type="project" value="UniProtKB-KW"/>
</dbReference>
<dbReference type="GO" id="GO:0003735">
    <property type="term" value="F:structural constituent of ribosome"/>
    <property type="evidence" value="ECO:0007669"/>
    <property type="project" value="InterPro"/>
</dbReference>
<dbReference type="GO" id="GO:0006412">
    <property type="term" value="P:translation"/>
    <property type="evidence" value="ECO:0007669"/>
    <property type="project" value="UniProtKB-UniRule"/>
</dbReference>
<dbReference type="Gene3D" id="2.20.28.120">
    <property type="entry name" value="Ribosomal protein L33"/>
    <property type="match status" value="1"/>
</dbReference>
<dbReference type="HAMAP" id="MF_00294">
    <property type="entry name" value="Ribosomal_bL33"/>
    <property type="match status" value="1"/>
</dbReference>
<dbReference type="InterPro" id="IPR001705">
    <property type="entry name" value="Ribosomal_bL33"/>
</dbReference>
<dbReference type="InterPro" id="IPR018264">
    <property type="entry name" value="Ribosomal_bL33_CS"/>
</dbReference>
<dbReference type="InterPro" id="IPR038584">
    <property type="entry name" value="Ribosomal_bL33_sf"/>
</dbReference>
<dbReference type="InterPro" id="IPR011332">
    <property type="entry name" value="Ribosomal_zn-bd"/>
</dbReference>
<dbReference type="NCBIfam" id="NF001764">
    <property type="entry name" value="PRK00504.1"/>
    <property type="match status" value="1"/>
</dbReference>
<dbReference type="NCBIfam" id="NF001860">
    <property type="entry name" value="PRK00595.1"/>
    <property type="match status" value="1"/>
</dbReference>
<dbReference type="NCBIfam" id="TIGR01023">
    <property type="entry name" value="rpmG_bact"/>
    <property type="match status" value="1"/>
</dbReference>
<dbReference type="PANTHER" id="PTHR43168">
    <property type="entry name" value="50S RIBOSOMAL PROTEIN L33, CHLOROPLASTIC"/>
    <property type="match status" value="1"/>
</dbReference>
<dbReference type="PANTHER" id="PTHR43168:SF2">
    <property type="entry name" value="LARGE RIBOSOMAL SUBUNIT PROTEIN BL33C"/>
    <property type="match status" value="1"/>
</dbReference>
<dbReference type="Pfam" id="PF00471">
    <property type="entry name" value="Ribosomal_L33"/>
    <property type="match status" value="1"/>
</dbReference>
<dbReference type="SUPFAM" id="SSF57829">
    <property type="entry name" value="Zn-binding ribosomal proteins"/>
    <property type="match status" value="1"/>
</dbReference>
<dbReference type="PROSITE" id="PS00582">
    <property type="entry name" value="RIBOSOMAL_L33"/>
    <property type="match status" value="1"/>
</dbReference>